<evidence type="ECO:0000256" key="1">
    <source>
        <dbReference type="SAM" id="MobiDB-lite"/>
    </source>
</evidence>
<evidence type="ECO:0000269" key="2">
    <source>
    </source>
</evidence>
<evidence type="ECO:0000305" key="3"/>
<comment type="subcellular location">
    <subcellularLocation>
        <location evidence="3">Nucleus</location>
    </subcellularLocation>
</comment>
<feature type="chain" id="PRO_0000191819" description="Zinc finger protein 385D">
    <location>
        <begin position="1"/>
        <end position="395"/>
    </location>
</feature>
<feature type="zinc finger region" description="Matrin-type 1">
    <location>
        <begin position="80"/>
        <end position="110"/>
    </location>
</feature>
<feature type="zinc finger region" description="Matrin-type 2">
    <location>
        <begin position="204"/>
        <end position="234"/>
    </location>
</feature>
<feature type="zinc finger region" description="Matrin-type 3">
    <location>
        <begin position="267"/>
        <end position="297"/>
    </location>
</feature>
<feature type="region of interest" description="Disordered" evidence="1">
    <location>
        <begin position="169"/>
        <end position="194"/>
    </location>
</feature>
<feature type="region of interest" description="Disordered" evidence="1">
    <location>
        <begin position="282"/>
        <end position="309"/>
    </location>
</feature>
<feature type="compositionally biased region" description="Polar residues" evidence="1">
    <location>
        <begin position="169"/>
        <end position="193"/>
    </location>
</feature>
<feature type="sequence variant" id="VAR_036058" description="In a colorectal cancer sample; somatic mutation; dbSNP:rs757067821." evidence="2">
    <original>A</original>
    <variation>T</variation>
    <location>
        <position position="386"/>
    </location>
</feature>
<feature type="sequence variant" id="VAR_036059" description="In a colorectal cancer sample; somatic mutation." evidence="2">
    <original>H</original>
    <variation>Q</variation>
    <location>
        <position position="387"/>
    </location>
</feature>
<organism>
    <name type="scientific">Homo sapiens</name>
    <name type="common">Human</name>
    <dbReference type="NCBI Taxonomy" id="9606"/>
    <lineage>
        <taxon>Eukaryota</taxon>
        <taxon>Metazoa</taxon>
        <taxon>Chordata</taxon>
        <taxon>Craniata</taxon>
        <taxon>Vertebrata</taxon>
        <taxon>Euteleostomi</taxon>
        <taxon>Mammalia</taxon>
        <taxon>Eutheria</taxon>
        <taxon>Euarchontoglires</taxon>
        <taxon>Primates</taxon>
        <taxon>Haplorrhini</taxon>
        <taxon>Catarrhini</taxon>
        <taxon>Hominidae</taxon>
        <taxon>Homo</taxon>
    </lineage>
</organism>
<reference key="1">
    <citation type="journal article" date="2004" name="Nat. Genet.">
        <title>Complete sequencing and characterization of 21,243 full-length human cDNAs.</title>
        <authorList>
            <person name="Ota T."/>
            <person name="Suzuki Y."/>
            <person name="Nishikawa T."/>
            <person name="Otsuki T."/>
            <person name="Sugiyama T."/>
            <person name="Irie R."/>
            <person name="Wakamatsu A."/>
            <person name="Hayashi K."/>
            <person name="Sato H."/>
            <person name="Nagai K."/>
            <person name="Kimura K."/>
            <person name="Makita H."/>
            <person name="Sekine M."/>
            <person name="Obayashi M."/>
            <person name="Nishi T."/>
            <person name="Shibahara T."/>
            <person name="Tanaka T."/>
            <person name="Ishii S."/>
            <person name="Yamamoto J."/>
            <person name="Saito K."/>
            <person name="Kawai Y."/>
            <person name="Isono Y."/>
            <person name="Nakamura Y."/>
            <person name="Nagahari K."/>
            <person name="Murakami K."/>
            <person name="Yasuda T."/>
            <person name="Iwayanagi T."/>
            <person name="Wagatsuma M."/>
            <person name="Shiratori A."/>
            <person name="Sudo H."/>
            <person name="Hosoiri T."/>
            <person name="Kaku Y."/>
            <person name="Kodaira H."/>
            <person name="Kondo H."/>
            <person name="Sugawara M."/>
            <person name="Takahashi M."/>
            <person name="Kanda K."/>
            <person name="Yokoi T."/>
            <person name="Furuya T."/>
            <person name="Kikkawa E."/>
            <person name="Omura Y."/>
            <person name="Abe K."/>
            <person name="Kamihara K."/>
            <person name="Katsuta N."/>
            <person name="Sato K."/>
            <person name="Tanikawa M."/>
            <person name="Yamazaki M."/>
            <person name="Ninomiya K."/>
            <person name="Ishibashi T."/>
            <person name="Yamashita H."/>
            <person name="Murakawa K."/>
            <person name="Fujimori K."/>
            <person name="Tanai H."/>
            <person name="Kimata M."/>
            <person name="Watanabe M."/>
            <person name="Hiraoka S."/>
            <person name="Chiba Y."/>
            <person name="Ishida S."/>
            <person name="Ono Y."/>
            <person name="Takiguchi S."/>
            <person name="Watanabe S."/>
            <person name="Yosida M."/>
            <person name="Hotuta T."/>
            <person name="Kusano J."/>
            <person name="Kanehori K."/>
            <person name="Takahashi-Fujii A."/>
            <person name="Hara H."/>
            <person name="Tanase T.-O."/>
            <person name="Nomura Y."/>
            <person name="Togiya S."/>
            <person name="Komai F."/>
            <person name="Hara R."/>
            <person name="Takeuchi K."/>
            <person name="Arita M."/>
            <person name="Imose N."/>
            <person name="Musashino K."/>
            <person name="Yuuki H."/>
            <person name="Oshima A."/>
            <person name="Sasaki N."/>
            <person name="Aotsuka S."/>
            <person name="Yoshikawa Y."/>
            <person name="Matsunawa H."/>
            <person name="Ichihara T."/>
            <person name="Shiohata N."/>
            <person name="Sano S."/>
            <person name="Moriya S."/>
            <person name="Momiyama H."/>
            <person name="Satoh N."/>
            <person name="Takami S."/>
            <person name="Terashima Y."/>
            <person name="Suzuki O."/>
            <person name="Nakagawa S."/>
            <person name="Senoh A."/>
            <person name="Mizoguchi H."/>
            <person name="Goto Y."/>
            <person name="Shimizu F."/>
            <person name="Wakebe H."/>
            <person name="Hishigaki H."/>
            <person name="Watanabe T."/>
            <person name="Sugiyama A."/>
            <person name="Takemoto M."/>
            <person name="Kawakami B."/>
            <person name="Yamazaki M."/>
            <person name="Watanabe K."/>
            <person name="Kumagai A."/>
            <person name="Itakura S."/>
            <person name="Fukuzumi Y."/>
            <person name="Fujimori Y."/>
            <person name="Komiyama M."/>
            <person name="Tashiro H."/>
            <person name="Tanigami A."/>
            <person name="Fujiwara T."/>
            <person name="Ono T."/>
            <person name="Yamada K."/>
            <person name="Fujii Y."/>
            <person name="Ozaki K."/>
            <person name="Hirao M."/>
            <person name="Ohmori Y."/>
            <person name="Kawabata A."/>
            <person name="Hikiji T."/>
            <person name="Kobatake N."/>
            <person name="Inagaki H."/>
            <person name="Ikema Y."/>
            <person name="Okamoto S."/>
            <person name="Okitani R."/>
            <person name="Kawakami T."/>
            <person name="Noguchi S."/>
            <person name="Itoh T."/>
            <person name="Shigeta K."/>
            <person name="Senba T."/>
            <person name="Matsumura K."/>
            <person name="Nakajima Y."/>
            <person name="Mizuno T."/>
            <person name="Morinaga M."/>
            <person name="Sasaki M."/>
            <person name="Togashi T."/>
            <person name="Oyama M."/>
            <person name="Hata H."/>
            <person name="Watanabe M."/>
            <person name="Komatsu T."/>
            <person name="Mizushima-Sugano J."/>
            <person name="Satoh T."/>
            <person name="Shirai Y."/>
            <person name="Takahashi Y."/>
            <person name="Nakagawa K."/>
            <person name="Okumura K."/>
            <person name="Nagase T."/>
            <person name="Nomura N."/>
            <person name="Kikuchi H."/>
            <person name="Masuho Y."/>
            <person name="Yamashita R."/>
            <person name="Nakai K."/>
            <person name="Yada T."/>
            <person name="Nakamura Y."/>
            <person name="Ohara O."/>
            <person name="Isogai T."/>
            <person name="Sugano S."/>
        </authorList>
    </citation>
    <scope>NUCLEOTIDE SEQUENCE [LARGE SCALE MRNA]</scope>
    <source>
        <tissue>Kidney epithelium</tissue>
    </source>
</reference>
<reference key="2">
    <citation type="journal article" date="2004" name="Genome Res.">
        <title>The status, quality, and expansion of the NIH full-length cDNA project: the Mammalian Gene Collection (MGC).</title>
        <authorList>
            <consortium name="The MGC Project Team"/>
        </authorList>
    </citation>
    <scope>NUCLEOTIDE SEQUENCE [LARGE SCALE MRNA]</scope>
    <source>
        <tissue>Kidney</tissue>
    </source>
</reference>
<reference key="3">
    <citation type="journal article" date="2006" name="Science">
        <title>The consensus coding sequences of human breast and colorectal cancers.</title>
        <authorList>
            <person name="Sjoeblom T."/>
            <person name="Jones S."/>
            <person name="Wood L.D."/>
            <person name="Parsons D.W."/>
            <person name="Lin J."/>
            <person name="Barber T.D."/>
            <person name="Mandelker D."/>
            <person name="Leary R.J."/>
            <person name="Ptak J."/>
            <person name="Silliman N."/>
            <person name="Szabo S."/>
            <person name="Buckhaults P."/>
            <person name="Farrell C."/>
            <person name="Meeh P."/>
            <person name="Markowitz S.D."/>
            <person name="Willis J."/>
            <person name="Dawson D."/>
            <person name="Willson J.K.V."/>
            <person name="Gazdar A.F."/>
            <person name="Hartigan J."/>
            <person name="Wu L."/>
            <person name="Liu C."/>
            <person name="Parmigiani G."/>
            <person name="Park B.H."/>
            <person name="Bachman K.E."/>
            <person name="Papadopoulos N."/>
            <person name="Vogelstein B."/>
            <person name="Kinzler K.W."/>
            <person name="Velculescu V.E."/>
        </authorList>
    </citation>
    <scope>VARIANTS [LARGE SCALE ANALYSIS] THR-386 AND GLN-387</scope>
</reference>
<keyword id="KW-0479">Metal-binding</keyword>
<keyword id="KW-0539">Nucleus</keyword>
<keyword id="KW-1267">Proteomics identification</keyword>
<keyword id="KW-1185">Reference proteome</keyword>
<keyword id="KW-0677">Repeat</keyword>
<keyword id="KW-0862">Zinc</keyword>
<keyword id="KW-0863">Zinc-finger</keyword>
<gene>
    <name type="primary">ZNF385D</name>
    <name type="synonym">ZNF659</name>
</gene>
<sequence>MRNIMYFGGTCQSPALPALVRPPAPPLQPSLDIKPFLPFPLDTAAAVNLFPNFNAMDPIQKAVINHTFGVPLPHRRKQIISCNICQLRFNSDSQAAAHYKGTKHAKKLKALEAMKNKQKSVTAKDSAKTTFTSITTNTINTSSDKTDGTAGTPAISTTTTVEIRKSSVMTTEITSKVEKSPTTATGNSSCPSTETEEEKAKRLLYCSLCKVAVNSASQLEAHNSGTKHKTMLEARNGSGTIKAFPRAGVKGKGPVNKGNTGLQNKTFHCEICDVHVNSETQLKQHISSRRHKDRAAGKPPKPKYSPYNKLQKTAHPLGVKLVFSKEPSKPLAPRILPNPLAAAAAAAAVAVSSPFSLRTAPAATLFQTSALPPALLRPAPGPIRTAHTPVLFAPY</sequence>
<proteinExistence type="evidence at protein level"/>
<dbReference type="EMBL" id="AK026072">
    <property type="protein sequence ID" value="BAB15350.1"/>
    <property type="molecule type" value="mRNA"/>
</dbReference>
<dbReference type="EMBL" id="BC007212">
    <property type="protein sequence ID" value="AAH07212.1"/>
    <property type="molecule type" value="mRNA"/>
</dbReference>
<dbReference type="CCDS" id="CCDS2636.1"/>
<dbReference type="RefSeq" id="NP_078973.1">
    <property type="nucleotide sequence ID" value="NM_024697.3"/>
</dbReference>
<dbReference type="BioGRID" id="122861">
    <property type="interactions" value="1"/>
</dbReference>
<dbReference type="FunCoup" id="Q9H6B1">
    <property type="interactions" value="597"/>
</dbReference>
<dbReference type="IntAct" id="Q9H6B1">
    <property type="interactions" value="1"/>
</dbReference>
<dbReference type="STRING" id="9606.ENSP00000281523"/>
<dbReference type="GlyCosmos" id="Q9H6B1">
    <property type="glycosylation" value="1 site, 1 glycan"/>
</dbReference>
<dbReference type="GlyGen" id="Q9H6B1">
    <property type="glycosylation" value="1 site, 1 O-linked glycan (1 site)"/>
</dbReference>
<dbReference type="iPTMnet" id="Q9H6B1"/>
<dbReference type="PhosphoSitePlus" id="Q9H6B1"/>
<dbReference type="BioMuta" id="ZNF385D"/>
<dbReference type="DMDM" id="74733598"/>
<dbReference type="MassIVE" id="Q9H6B1"/>
<dbReference type="PaxDb" id="9606-ENSP00000281523"/>
<dbReference type="PeptideAtlas" id="Q9H6B1"/>
<dbReference type="ProteomicsDB" id="80972"/>
<dbReference type="Antibodypedia" id="27129">
    <property type="antibodies" value="79 antibodies from 20 providers"/>
</dbReference>
<dbReference type="DNASU" id="79750"/>
<dbReference type="Ensembl" id="ENST00000281523.8">
    <property type="protein sequence ID" value="ENSP00000281523.2"/>
    <property type="gene ID" value="ENSG00000151789.13"/>
</dbReference>
<dbReference type="GeneID" id="79750"/>
<dbReference type="KEGG" id="hsa:79750"/>
<dbReference type="MANE-Select" id="ENST00000281523.8">
    <property type="protein sequence ID" value="ENSP00000281523.2"/>
    <property type="RefSeq nucleotide sequence ID" value="NM_024697.3"/>
    <property type="RefSeq protein sequence ID" value="NP_078973.1"/>
</dbReference>
<dbReference type="UCSC" id="uc003cce.4">
    <property type="organism name" value="human"/>
</dbReference>
<dbReference type="AGR" id="HGNC:26191"/>
<dbReference type="CTD" id="79750"/>
<dbReference type="DisGeNET" id="79750"/>
<dbReference type="GeneCards" id="ZNF385D"/>
<dbReference type="HGNC" id="HGNC:26191">
    <property type="gene designation" value="ZNF385D"/>
</dbReference>
<dbReference type="HPA" id="ENSG00000151789">
    <property type="expression patterns" value="Tissue enhanced (brain, retina)"/>
</dbReference>
<dbReference type="neXtProt" id="NX_Q9H6B1"/>
<dbReference type="OpenTargets" id="ENSG00000151789"/>
<dbReference type="PharmGKB" id="PA162410152"/>
<dbReference type="VEuPathDB" id="HostDB:ENSG00000151789"/>
<dbReference type="eggNOG" id="ENOG502QY40">
    <property type="taxonomic scope" value="Eukaryota"/>
</dbReference>
<dbReference type="GeneTree" id="ENSGT00940000160242"/>
<dbReference type="HOGENOM" id="CLU_027876_1_0_1"/>
<dbReference type="InParanoid" id="Q9H6B1"/>
<dbReference type="OMA" id="RNIMYFX"/>
<dbReference type="OrthoDB" id="9448812at2759"/>
<dbReference type="PAN-GO" id="Q9H6B1">
    <property type="GO annotations" value="1 GO annotation based on evolutionary models"/>
</dbReference>
<dbReference type="PhylomeDB" id="Q9H6B1"/>
<dbReference type="TreeFam" id="TF326622"/>
<dbReference type="PathwayCommons" id="Q9H6B1"/>
<dbReference type="SignaLink" id="Q9H6B1"/>
<dbReference type="BioGRID-ORCS" id="79750">
    <property type="hits" value="8 hits in 1150 CRISPR screens"/>
</dbReference>
<dbReference type="ChiTaRS" id="ZNF385D">
    <property type="organism name" value="human"/>
</dbReference>
<dbReference type="GenomeRNAi" id="79750"/>
<dbReference type="Pharos" id="Q9H6B1">
    <property type="development level" value="Tdark"/>
</dbReference>
<dbReference type="PRO" id="PR:Q9H6B1"/>
<dbReference type="Proteomes" id="UP000005640">
    <property type="component" value="Chromosome 3"/>
</dbReference>
<dbReference type="RNAct" id="Q9H6B1">
    <property type="molecule type" value="protein"/>
</dbReference>
<dbReference type="Bgee" id="ENSG00000151789">
    <property type="expression patterns" value="Expressed in descending thoracic aorta and 144 other cell types or tissues"/>
</dbReference>
<dbReference type="ExpressionAtlas" id="Q9H6B1">
    <property type="expression patterns" value="baseline and differential"/>
</dbReference>
<dbReference type="GO" id="GO:0005634">
    <property type="term" value="C:nucleus"/>
    <property type="evidence" value="ECO:0000318"/>
    <property type="project" value="GO_Central"/>
</dbReference>
<dbReference type="GO" id="GO:1990837">
    <property type="term" value="F:sequence-specific double-stranded DNA binding"/>
    <property type="evidence" value="ECO:0000314"/>
    <property type="project" value="ARUK-UCL"/>
</dbReference>
<dbReference type="GO" id="GO:0008270">
    <property type="term" value="F:zinc ion binding"/>
    <property type="evidence" value="ECO:0007669"/>
    <property type="project" value="UniProtKB-KW"/>
</dbReference>
<dbReference type="FunFam" id="3.30.160.60:FF:000276">
    <property type="entry name" value="zinc finger protein 385A isoform X3"/>
    <property type="match status" value="1"/>
</dbReference>
<dbReference type="FunFam" id="3.30.160.60:FF:000121">
    <property type="entry name" value="zinc finger protein 385B isoform X1"/>
    <property type="match status" value="1"/>
</dbReference>
<dbReference type="FunFam" id="3.30.160.60:FF:000293">
    <property type="entry name" value="zinc finger protein 385B isoform X3"/>
    <property type="match status" value="1"/>
</dbReference>
<dbReference type="Gene3D" id="3.30.160.60">
    <property type="entry name" value="Classic Zinc Finger"/>
    <property type="match status" value="3"/>
</dbReference>
<dbReference type="InterPro" id="IPR003604">
    <property type="entry name" value="Matrin/U1-like-C_Znf_C2H2"/>
</dbReference>
<dbReference type="InterPro" id="IPR051845">
    <property type="entry name" value="Znf385"/>
</dbReference>
<dbReference type="InterPro" id="IPR036236">
    <property type="entry name" value="Znf_C2H2_sf"/>
</dbReference>
<dbReference type="InterPro" id="IPR013087">
    <property type="entry name" value="Znf_C2H2_type"/>
</dbReference>
<dbReference type="PANTHER" id="PTHR23067">
    <property type="entry name" value="DOUBLE-STRANDED RNA-BINDING ZINC FINGER PROTEIN"/>
    <property type="match status" value="1"/>
</dbReference>
<dbReference type="PANTHER" id="PTHR23067:SF12">
    <property type="entry name" value="ZINC FINGER PROTEIN 385D"/>
    <property type="match status" value="1"/>
</dbReference>
<dbReference type="Pfam" id="PF12874">
    <property type="entry name" value="zf-met"/>
    <property type="match status" value="3"/>
</dbReference>
<dbReference type="SMART" id="SM00355">
    <property type="entry name" value="ZnF_C2H2"/>
    <property type="match status" value="3"/>
</dbReference>
<dbReference type="SMART" id="SM00451">
    <property type="entry name" value="ZnF_U1"/>
    <property type="match status" value="3"/>
</dbReference>
<dbReference type="SUPFAM" id="SSF57667">
    <property type="entry name" value="beta-beta-alpha zinc fingers"/>
    <property type="match status" value="3"/>
</dbReference>
<accession>Q9H6B1</accession>
<name>Z385D_HUMAN</name>
<protein>
    <recommendedName>
        <fullName>Zinc finger protein 385D</fullName>
    </recommendedName>
    <alternativeName>
        <fullName>Zinc finger protein 659</fullName>
    </alternativeName>
</protein>